<gene>
    <name evidence="1" type="primary">rpmI</name>
    <name type="ordered locus">PGN_0964</name>
</gene>
<sequence length="65" mass="7496">MPKLKTNSGAKKRFALTGTGKIKRKHAFKSHILTKKTKKQKRNLTYFSTVHKVDENAVKQLLCLR</sequence>
<evidence type="ECO:0000255" key="1">
    <source>
        <dbReference type="HAMAP-Rule" id="MF_00514"/>
    </source>
</evidence>
<evidence type="ECO:0000305" key="2"/>
<comment type="similarity">
    <text evidence="1">Belongs to the bacterial ribosomal protein bL35 family.</text>
</comment>
<reference key="1">
    <citation type="journal article" date="2008" name="DNA Res.">
        <title>Determination of the genome sequence of Porphyromonas gingivalis strain ATCC 33277 and genomic comparison with strain W83 revealed extensive genome rearrangements in P. gingivalis.</title>
        <authorList>
            <person name="Naito M."/>
            <person name="Hirakawa H."/>
            <person name="Yamashita A."/>
            <person name="Ohara N."/>
            <person name="Shoji M."/>
            <person name="Yukitake H."/>
            <person name="Nakayama K."/>
            <person name="Toh H."/>
            <person name="Yoshimura F."/>
            <person name="Kuhara S."/>
            <person name="Hattori M."/>
            <person name="Hayashi T."/>
            <person name="Nakayama K."/>
        </authorList>
    </citation>
    <scope>NUCLEOTIDE SEQUENCE [LARGE SCALE GENOMIC DNA]</scope>
    <source>
        <strain>ATCC 33277 / DSM 20709 / CIP 103683 / JCM 12257 / NCTC 11834 / 2561</strain>
    </source>
</reference>
<name>RL35_PORG3</name>
<keyword id="KW-0687">Ribonucleoprotein</keyword>
<keyword id="KW-0689">Ribosomal protein</keyword>
<proteinExistence type="inferred from homology"/>
<organism>
    <name type="scientific">Porphyromonas gingivalis (strain ATCC 33277 / DSM 20709 / CIP 103683 / JCM 12257 / NCTC 11834 / 2561)</name>
    <dbReference type="NCBI Taxonomy" id="431947"/>
    <lineage>
        <taxon>Bacteria</taxon>
        <taxon>Pseudomonadati</taxon>
        <taxon>Bacteroidota</taxon>
        <taxon>Bacteroidia</taxon>
        <taxon>Bacteroidales</taxon>
        <taxon>Porphyromonadaceae</taxon>
        <taxon>Porphyromonas</taxon>
    </lineage>
</organism>
<protein>
    <recommendedName>
        <fullName evidence="1">Large ribosomal subunit protein bL35</fullName>
    </recommendedName>
    <alternativeName>
        <fullName evidence="2">50S ribosomal protein L35</fullName>
    </alternativeName>
</protein>
<feature type="chain" id="PRO_1000127390" description="Large ribosomal subunit protein bL35">
    <location>
        <begin position="1"/>
        <end position="65"/>
    </location>
</feature>
<accession>B2RJD8</accession>
<dbReference type="EMBL" id="AP009380">
    <property type="protein sequence ID" value="BAG33483.1"/>
    <property type="molecule type" value="Genomic_DNA"/>
</dbReference>
<dbReference type="RefSeq" id="WP_004584226.1">
    <property type="nucleotide sequence ID" value="NZ_CP025930.1"/>
</dbReference>
<dbReference type="SMR" id="B2RJD8"/>
<dbReference type="GeneID" id="57239258"/>
<dbReference type="KEGG" id="pgn:PGN_0964"/>
<dbReference type="eggNOG" id="COG0291">
    <property type="taxonomic scope" value="Bacteria"/>
</dbReference>
<dbReference type="HOGENOM" id="CLU_169643_3_0_10"/>
<dbReference type="OrthoDB" id="47476at2"/>
<dbReference type="BioCyc" id="PGIN431947:G1G2V-1083-MONOMER"/>
<dbReference type="Proteomes" id="UP000008842">
    <property type="component" value="Chromosome"/>
</dbReference>
<dbReference type="GO" id="GO:0022625">
    <property type="term" value="C:cytosolic large ribosomal subunit"/>
    <property type="evidence" value="ECO:0007669"/>
    <property type="project" value="TreeGrafter"/>
</dbReference>
<dbReference type="GO" id="GO:0003735">
    <property type="term" value="F:structural constituent of ribosome"/>
    <property type="evidence" value="ECO:0007669"/>
    <property type="project" value="InterPro"/>
</dbReference>
<dbReference type="GO" id="GO:0006412">
    <property type="term" value="P:translation"/>
    <property type="evidence" value="ECO:0007669"/>
    <property type="project" value="UniProtKB-UniRule"/>
</dbReference>
<dbReference type="FunFam" id="4.10.410.60:FF:000001">
    <property type="entry name" value="50S ribosomal protein L35"/>
    <property type="match status" value="1"/>
</dbReference>
<dbReference type="Gene3D" id="4.10.410.60">
    <property type="match status" value="1"/>
</dbReference>
<dbReference type="HAMAP" id="MF_00514">
    <property type="entry name" value="Ribosomal_bL35"/>
    <property type="match status" value="1"/>
</dbReference>
<dbReference type="InterPro" id="IPR001706">
    <property type="entry name" value="Ribosomal_bL35"/>
</dbReference>
<dbReference type="InterPro" id="IPR021137">
    <property type="entry name" value="Ribosomal_bL35-like"/>
</dbReference>
<dbReference type="InterPro" id="IPR018265">
    <property type="entry name" value="Ribosomal_bL35_CS"/>
</dbReference>
<dbReference type="InterPro" id="IPR037229">
    <property type="entry name" value="Ribosomal_bL35_sf"/>
</dbReference>
<dbReference type="NCBIfam" id="TIGR00001">
    <property type="entry name" value="rpmI_bact"/>
    <property type="match status" value="1"/>
</dbReference>
<dbReference type="PANTHER" id="PTHR33343">
    <property type="entry name" value="54S RIBOSOMAL PROTEIN BL35M"/>
    <property type="match status" value="1"/>
</dbReference>
<dbReference type="PANTHER" id="PTHR33343:SF1">
    <property type="entry name" value="LARGE RIBOSOMAL SUBUNIT PROTEIN BL35M"/>
    <property type="match status" value="1"/>
</dbReference>
<dbReference type="Pfam" id="PF01632">
    <property type="entry name" value="Ribosomal_L35p"/>
    <property type="match status" value="1"/>
</dbReference>
<dbReference type="PRINTS" id="PR00064">
    <property type="entry name" value="RIBOSOMALL35"/>
</dbReference>
<dbReference type="SUPFAM" id="SSF143034">
    <property type="entry name" value="L35p-like"/>
    <property type="match status" value="1"/>
</dbReference>
<dbReference type="PROSITE" id="PS00936">
    <property type="entry name" value="RIBOSOMAL_L35"/>
    <property type="match status" value="1"/>
</dbReference>